<geneLocation type="plasmid">
    <name>pSymB</name>
    <name>megaplasmid 2</name>
</geneLocation>
<evidence type="ECO:0000250" key="1"/>
<evidence type="ECO:0000255" key="2">
    <source>
        <dbReference type="PROSITE-ProRule" id="PRU01098"/>
    </source>
</evidence>
<evidence type="ECO:0000269" key="3">
    <source>
    </source>
</evidence>
<evidence type="ECO:0000269" key="4">
    <source>
    </source>
</evidence>
<evidence type="ECO:0000305" key="5"/>
<sequence>MSKTVLNAVGTPLYYSGSSTAWFSATGSGPTLHGTAGNDSMWGDSSVNVTMIGGRGDDIYYLYSSINRAYEAAGEGVDTISTWMSYTLPANFENLTVTGSGRFAFGNEADNIIKGGSGTQTIDGRGGNDVLIGAGGADTFVFARGNGSDLITDFNYDDIVRLDGYGFTSFEQILSNVAQEGADLRLHLADGESLVFANTTADELQAHQFRLSLDRSVLSQTFSDEFNTLQLRNGTSGVWDAKFWWAPEKGATLSSNGEQQWYINPSYEPTASVNPFSVNNGVLTITAAPASEAIQAEINGYDYTSGMLTTYSSFAQTYGYFEMRADMPDDQGVWPAFWLLPADGSWPPELDVVEMRGQDSNTVIATVHSNETGSRTSIENSVKVADASGFHTYGVLWTEEEIVWYFDDAAIARADTPSDMHDPMYMLVNLAVGGIAGTPRDGLADGSEMKIDYIKAYSLDADWQI</sequence>
<gene>
    <name type="primary">exsH</name>
    <name type="ordered locus">RB1055</name>
    <name type="ORF">SMb20932</name>
</gene>
<feature type="chain" id="PRO_0000075391" description="Endo-1,3-1,4-beta-glycanase ExsH">
    <location>
        <begin position="1"/>
        <end position="465"/>
    </location>
</feature>
<feature type="repeat" description="Hemolysin-type calcium-binding 1">
    <location>
        <begin position="33"/>
        <end position="50"/>
    </location>
</feature>
<feature type="repeat" description="Hemolysin-type calcium-binding 2">
    <location>
        <begin position="105"/>
        <end position="122"/>
    </location>
</feature>
<feature type="repeat" description="Hemolysin-type calcium-binding 3">
    <location>
        <begin position="123"/>
        <end position="140"/>
    </location>
</feature>
<feature type="domain" description="GH16" evidence="2">
    <location>
        <begin position="206"/>
        <end position="462"/>
    </location>
</feature>
<feature type="active site" description="Nucleophile" evidence="1">
    <location>
        <position position="349"/>
    </location>
</feature>
<feature type="active site" description="Proton donor" evidence="1">
    <location>
        <position position="354"/>
    </location>
</feature>
<accession>O33680</accession>
<dbReference type="EC" id="3.2.1.-"/>
<dbReference type="EMBL" id="U89164">
    <property type="protein sequence ID" value="AAB64093.1"/>
    <property type="molecule type" value="Genomic_DNA"/>
</dbReference>
<dbReference type="EMBL" id="AL591985">
    <property type="protein sequence ID" value="CAC49455.1"/>
    <property type="molecule type" value="Genomic_DNA"/>
</dbReference>
<dbReference type="PIR" id="G95973">
    <property type="entry name" value="G95973"/>
</dbReference>
<dbReference type="RefSeq" id="NP_437595.1">
    <property type="nucleotide sequence ID" value="NC_003078.1"/>
</dbReference>
<dbReference type="RefSeq" id="WP_010975894.1">
    <property type="nucleotide sequence ID" value="NC_003078.1"/>
</dbReference>
<dbReference type="SMR" id="O33680"/>
<dbReference type="CAZy" id="GH16">
    <property type="family name" value="Glycoside Hydrolase Family 16"/>
</dbReference>
<dbReference type="EnsemblBacteria" id="CAC49455">
    <property type="protein sequence ID" value="CAC49455"/>
    <property type="gene ID" value="SM_b20932"/>
</dbReference>
<dbReference type="KEGG" id="sme:SM_b20932"/>
<dbReference type="PATRIC" id="fig|266834.11.peg.5984"/>
<dbReference type="eggNOG" id="COG2273">
    <property type="taxonomic scope" value="Bacteria"/>
</dbReference>
<dbReference type="eggNOG" id="COG2931">
    <property type="taxonomic scope" value="Bacteria"/>
</dbReference>
<dbReference type="HOGENOM" id="CLU_031273_0_0_5"/>
<dbReference type="OrthoDB" id="9809583at2"/>
<dbReference type="UniPathway" id="UPA00631"/>
<dbReference type="Proteomes" id="UP000001976">
    <property type="component" value="Plasmid pSymB"/>
</dbReference>
<dbReference type="GO" id="GO:0005576">
    <property type="term" value="C:extracellular region"/>
    <property type="evidence" value="ECO:0007669"/>
    <property type="project" value="UniProtKB-SubCell"/>
</dbReference>
<dbReference type="GO" id="GO:0005509">
    <property type="term" value="F:calcium ion binding"/>
    <property type="evidence" value="ECO:0007669"/>
    <property type="project" value="InterPro"/>
</dbReference>
<dbReference type="GO" id="GO:0004553">
    <property type="term" value="F:hydrolase activity, hydrolyzing O-glycosyl compounds"/>
    <property type="evidence" value="ECO:0007669"/>
    <property type="project" value="InterPro"/>
</dbReference>
<dbReference type="GO" id="GO:0000271">
    <property type="term" value="P:polysaccharide biosynthetic process"/>
    <property type="evidence" value="ECO:0007669"/>
    <property type="project" value="UniProtKB-KW"/>
</dbReference>
<dbReference type="CDD" id="cd08023">
    <property type="entry name" value="GH16_laminarinase_like"/>
    <property type="match status" value="1"/>
</dbReference>
<dbReference type="Gene3D" id="2.60.120.200">
    <property type="match status" value="1"/>
</dbReference>
<dbReference type="Gene3D" id="2.150.10.10">
    <property type="entry name" value="Serralysin-like metalloprotease, C-terminal"/>
    <property type="match status" value="1"/>
</dbReference>
<dbReference type="InterPro" id="IPR013320">
    <property type="entry name" value="ConA-like_dom_sf"/>
</dbReference>
<dbReference type="InterPro" id="IPR000757">
    <property type="entry name" value="GH16"/>
</dbReference>
<dbReference type="InterPro" id="IPR050546">
    <property type="entry name" value="Glycosyl_Hydrlase_16"/>
</dbReference>
<dbReference type="InterPro" id="IPR001343">
    <property type="entry name" value="Hemolysn_Ca-bd"/>
</dbReference>
<dbReference type="InterPro" id="IPR011049">
    <property type="entry name" value="Serralysin-like_metalloprot_C"/>
</dbReference>
<dbReference type="PANTHER" id="PTHR10963:SF55">
    <property type="entry name" value="GLYCOSIDE HYDROLASE FAMILY 16 PROTEIN"/>
    <property type="match status" value="1"/>
</dbReference>
<dbReference type="PANTHER" id="PTHR10963">
    <property type="entry name" value="GLYCOSYL HYDROLASE-RELATED"/>
    <property type="match status" value="1"/>
</dbReference>
<dbReference type="Pfam" id="PF00722">
    <property type="entry name" value="Glyco_hydro_16"/>
    <property type="match status" value="1"/>
</dbReference>
<dbReference type="Pfam" id="PF00353">
    <property type="entry name" value="HemolysinCabind"/>
    <property type="match status" value="2"/>
</dbReference>
<dbReference type="PRINTS" id="PR00313">
    <property type="entry name" value="CABNDNGRPT"/>
</dbReference>
<dbReference type="SUPFAM" id="SSF51120">
    <property type="entry name" value="beta-Roll"/>
    <property type="match status" value="1"/>
</dbReference>
<dbReference type="SUPFAM" id="SSF49899">
    <property type="entry name" value="Concanavalin A-like lectins/glucanases"/>
    <property type="match status" value="1"/>
</dbReference>
<dbReference type="PROSITE" id="PS51762">
    <property type="entry name" value="GH16_2"/>
    <property type="match status" value="1"/>
</dbReference>
<organism>
    <name type="scientific">Rhizobium meliloti (strain 1021)</name>
    <name type="common">Ensifer meliloti</name>
    <name type="synonym">Sinorhizobium meliloti</name>
    <dbReference type="NCBI Taxonomy" id="266834"/>
    <lineage>
        <taxon>Bacteria</taxon>
        <taxon>Pseudomonadati</taxon>
        <taxon>Pseudomonadota</taxon>
        <taxon>Alphaproteobacteria</taxon>
        <taxon>Hyphomicrobiales</taxon>
        <taxon>Rhizobiaceae</taxon>
        <taxon>Sinorhizobium/Ensifer group</taxon>
        <taxon>Sinorhizobium</taxon>
    </lineage>
</organism>
<name>EXSH_RHIME</name>
<reference key="1">
    <citation type="journal article" date="1997" name="Mol. Microbiol.">
        <title>The Rhizobium meliloti exoK gene and prsD/prsE/exsH genes encode components of independent degradative pathways which contribute to production of low-molecular-weight succinoglycan.</title>
        <authorList>
            <person name="York G.M."/>
            <person name="Walker G.C."/>
        </authorList>
    </citation>
    <scope>NUCLEOTIDE SEQUENCE [GENOMIC DNA]</scope>
    <scope>FUNCTION</scope>
    <scope>SUBCELLULAR LOCATION</scope>
    <source>
        <strain>1021</strain>
    </source>
</reference>
<reference key="2">
    <citation type="journal article" date="2001" name="Proc. Natl. Acad. Sci. U.S.A.">
        <title>The complete sequence of the 1,683-kb pSymB megaplasmid from the N2-fixing endosymbiont Sinorhizobium meliloti.</title>
        <authorList>
            <person name="Finan T.M."/>
            <person name="Weidner S."/>
            <person name="Wong K."/>
            <person name="Buhrmester J."/>
            <person name="Chain P."/>
            <person name="Vorhoelter F.J."/>
            <person name="Hernandez-Lucas I."/>
            <person name="Becker A."/>
            <person name="Cowie A."/>
            <person name="Gouzy J."/>
            <person name="Golding B."/>
            <person name="Puehler A."/>
        </authorList>
    </citation>
    <scope>NUCLEOTIDE SEQUENCE [LARGE SCALE GENOMIC DNA]</scope>
    <source>
        <strain>1021</strain>
    </source>
</reference>
<reference key="3">
    <citation type="journal article" date="2001" name="Science">
        <title>The composite genome of the legume symbiont Sinorhizobium meliloti.</title>
        <authorList>
            <person name="Galibert F."/>
            <person name="Finan T.M."/>
            <person name="Long S.R."/>
            <person name="Puehler A."/>
            <person name="Abola P."/>
            <person name="Ampe F."/>
            <person name="Barloy-Hubler F."/>
            <person name="Barnett M.J."/>
            <person name="Becker A."/>
            <person name="Boistard P."/>
            <person name="Bothe G."/>
            <person name="Boutry M."/>
            <person name="Bowser L."/>
            <person name="Buhrmester J."/>
            <person name="Cadieu E."/>
            <person name="Capela D."/>
            <person name="Chain P."/>
            <person name="Cowie A."/>
            <person name="Davis R.W."/>
            <person name="Dreano S."/>
            <person name="Federspiel N.A."/>
            <person name="Fisher R.F."/>
            <person name="Gloux S."/>
            <person name="Godrie T."/>
            <person name="Goffeau A."/>
            <person name="Golding B."/>
            <person name="Gouzy J."/>
            <person name="Gurjal M."/>
            <person name="Hernandez-Lucas I."/>
            <person name="Hong A."/>
            <person name="Huizar L."/>
            <person name="Hyman R.W."/>
            <person name="Jones T."/>
            <person name="Kahn D."/>
            <person name="Kahn M.L."/>
            <person name="Kalman S."/>
            <person name="Keating D.H."/>
            <person name="Kiss E."/>
            <person name="Komp C."/>
            <person name="Lelaure V."/>
            <person name="Masuy D."/>
            <person name="Palm C."/>
            <person name="Peck M.C."/>
            <person name="Pohl T.M."/>
            <person name="Portetelle D."/>
            <person name="Purnelle B."/>
            <person name="Ramsperger U."/>
            <person name="Surzycki R."/>
            <person name="Thebault P."/>
            <person name="Vandenbol M."/>
            <person name="Vorhoelter F.J."/>
            <person name="Weidner S."/>
            <person name="Wells D.H."/>
            <person name="Wong K."/>
            <person name="Yeh K.-C."/>
            <person name="Batut J."/>
        </authorList>
    </citation>
    <scope>NUCLEOTIDE SEQUENCE [LARGE SCALE GENOMIC DNA]</scope>
    <source>
        <strain>1021</strain>
    </source>
</reference>
<reference key="4">
    <citation type="journal article" date="1998" name="Proc. Natl. Acad. Sci. U.S.A.">
        <title>The Rhizobium meliloti ExoK and ExsH glycanases specifically depolymerize nascent succinoglycan chains.</title>
        <authorList>
            <person name="York G.M."/>
            <person name="Walker G.C."/>
        </authorList>
    </citation>
    <scope>FUNCTION</scope>
    <scope>PATHWAY</scope>
    <scope>SUBCELLULAR LOCATION</scope>
    <scope>CHARACTERIZATION</scope>
    <source>
        <strain>1021</strain>
    </source>
</reference>
<comment type="function">
    <text evidence="3 4">Cleaves high molecular weight succinoglycan to yield LMW succinoglycan. Dynamically regulates the molecular weight distribution of succinoglycan by cleaving nascent succinoglycan only during a limited period after its synthesis, perhaps before it undergoes a time-dependent change in its conformation or aggregation state.</text>
</comment>
<comment type="pathway">
    <text evidence="4">Glycan metabolism; exopolysaccharide biosynthesis.</text>
</comment>
<comment type="subcellular location">
    <subcellularLocation>
        <location evidence="3 4">Secreted</location>
    </subcellularLocation>
    <text>Secreted by a type I secretion system composed of PrsD and PrsE.</text>
</comment>
<comment type="similarity">
    <text evidence="5">Belongs to the glycosyl hydrolase 16 family.</text>
</comment>
<protein>
    <recommendedName>
        <fullName>Endo-1,3-1,4-beta-glycanase ExsH</fullName>
        <ecNumber>3.2.1.-</ecNumber>
    </recommendedName>
    <alternativeName>
        <fullName>Succinoglycan biosynthesis protein ExsH</fullName>
    </alternativeName>
</protein>
<keyword id="KW-0270">Exopolysaccharide synthesis</keyword>
<keyword id="KW-0326">Glycosidase</keyword>
<keyword id="KW-0378">Hydrolase</keyword>
<keyword id="KW-0614">Plasmid</keyword>
<keyword id="KW-1185">Reference proteome</keyword>
<keyword id="KW-0677">Repeat</keyword>
<keyword id="KW-0964">Secreted</keyword>
<proteinExistence type="evidence at protein level"/>